<dbReference type="EMBL" id="AAFI02000006">
    <property type="protein sequence ID" value="EAL71627.1"/>
    <property type="molecule type" value="Genomic_DNA"/>
</dbReference>
<dbReference type="RefSeq" id="XP_645560.1">
    <property type="nucleotide sequence ID" value="XM_640468.1"/>
</dbReference>
<dbReference type="PaxDb" id="44689-DDB0168383"/>
<dbReference type="EnsemblProtists" id="EAL71627">
    <property type="protein sequence ID" value="EAL71627"/>
    <property type="gene ID" value="DDB_G0271526"/>
</dbReference>
<dbReference type="GeneID" id="8618016"/>
<dbReference type="KEGG" id="ddi:DDB_G0271526"/>
<dbReference type="dictyBase" id="DDB_G0271526"/>
<dbReference type="VEuPathDB" id="AmoebaDB:DDB_G0271526"/>
<dbReference type="HOGENOM" id="CLU_1558104_0_0_1"/>
<dbReference type="InParanoid" id="Q86AE7"/>
<dbReference type="PRO" id="PR:Q86AE7"/>
<dbReference type="Proteomes" id="UP000002195">
    <property type="component" value="Chromosome 2"/>
</dbReference>
<reference key="1">
    <citation type="journal article" date="2002" name="Nature">
        <title>Sequence and analysis of chromosome 2 of Dictyostelium discoideum.</title>
        <authorList>
            <person name="Gloeckner G."/>
            <person name="Eichinger L."/>
            <person name="Szafranski K."/>
            <person name="Pachebat J.A."/>
            <person name="Bankier A.T."/>
            <person name="Dear P.H."/>
            <person name="Lehmann R."/>
            <person name="Baumgart C."/>
            <person name="Parra G."/>
            <person name="Abril J.F."/>
            <person name="Guigo R."/>
            <person name="Kumpf K."/>
            <person name="Tunggal B."/>
            <person name="Cox E.C."/>
            <person name="Quail M.A."/>
            <person name="Platzer M."/>
            <person name="Rosenthal A."/>
            <person name="Noegel A.A."/>
        </authorList>
    </citation>
    <scope>NUCLEOTIDE SEQUENCE [LARGE SCALE GENOMIC DNA]</scope>
    <source>
        <strain>AX4</strain>
    </source>
</reference>
<reference key="2">
    <citation type="journal article" date="2005" name="Nature">
        <title>The genome of the social amoeba Dictyostelium discoideum.</title>
        <authorList>
            <person name="Eichinger L."/>
            <person name="Pachebat J.A."/>
            <person name="Gloeckner G."/>
            <person name="Rajandream M.A."/>
            <person name="Sucgang R."/>
            <person name="Berriman M."/>
            <person name="Song J."/>
            <person name="Olsen R."/>
            <person name="Szafranski K."/>
            <person name="Xu Q."/>
            <person name="Tunggal B."/>
            <person name="Kummerfeld S."/>
            <person name="Madera M."/>
            <person name="Konfortov B.A."/>
            <person name="Rivero F."/>
            <person name="Bankier A.T."/>
            <person name="Lehmann R."/>
            <person name="Hamlin N."/>
            <person name="Davies R."/>
            <person name="Gaudet P."/>
            <person name="Fey P."/>
            <person name="Pilcher K."/>
            <person name="Chen G."/>
            <person name="Saunders D."/>
            <person name="Sodergren E.J."/>
            <person name="Davis P."/>
            <person name="Kerhornou A."/>
            <person name="Nie X."/>
            <person name="Hall N."/>
            <person name="Anjard C."/>
            <person name="Hemphill L."/>
            <person name="Bason N."/>
            <person name="Farbrother P."/>
            <person name="Desany B."/>
            <person name="Just E."/>
            <person name="Morio T."/>
            <person name="Rost R."/>
            <person name="Churcher C.M."/>
            <person name="Cooper J."/>
            <person name="Haydock S."/>
            <person name="van Driessche N."/>
            <person name="Cronin A."/>
            <person name="Goodhead I."/>
            <person name="Muzny D.M."/>
            <person name="Mourier T."/>
            <person name="Pain A."/>
            <person name="Lu M."/>
            <person name="Harper D."/>
            <person name="Lindsay R."/>
            <person name="Hauser H."/>
            <person name="James K.D."/>
            <person name="Quiles M."/>
            <person name="Madan Babu M."/>
            <person name="Saito T."/>
            <person name="Buchrieser C."/>
            <person name="Wardroper A."/>
            <person name="Felder M."/>
            <person name="Thangavelu M."/>
            <person name="Johnson D."/>
            <person name="Knights A."/>
            <person name="Loulseged H."/>
            <person name="Mungall K.L."/>
            <person name="Oliver K."/>
            <person name="Price C."/>
            <person name="Quail M.A."/>
            <person name="Urushihara H."/>
            <person name="Hernandez J."/>
            <person name="Rabbinowitsch E."/>
            <person name="Steffen D."/>
            <person name="Sanders M."/>
            <person name="Ma J."/>
            <person name="Kohara Y."/>
            <person name="Sharp S."/>
            <person name="Simmonds M.N."/>
            <person name="Spiegler S."/>
            <person name="Tivey A."/>
            <person name="Sugano S."/>
            <person name="White B."/>
            <person name="Walker D."/>
            <person name="Woodward J.R."/>
            <person name="Winckler T."/>
            <person name="Tanaka Y."/>
            <person name="Shaulsky G."/>
            <person name="Schleicher M."/>
            <person name="Weinstock G.M."/>
            <person name="Rosenthal A."/>
            <person name="Cox E.C."/>
            <person name="Chisholm R.L."/>
            <person name="Gibbs R.A."/>
            <person name="Loomis W.F."/>
            <person name="Platzer M."/>
            <person name="Kay R.R."/>
            <person name="Williams J.G."/>
            <person name="Dear P.H."/>
            <person name="Noegel A.A."/>
            <person name="Barrell B.G."/>
            <person name="Kuspa A."/>
        </authorList>
    </citation>
    <scope>NUCLEOTIDE SEQUENCE [LARGE SCALE GENOMIC DNA]</scope>
    <source>
        <strain>AX4</strain>
    </source>
</reference>
<proteinExistence type="predicted"/>
<keyword id="KW-1185">Reference proteome</keyword>
<organism>
    <name type="scientific">Dictyostelium discoideum</name>
    <name type="common">Social amoeba</name>
    <dbReference type="NCBI Taxonomy" id="44689"/>
    <lineage>
        <taxon>Eukaryota</taxon>
        <taxon>Amoebozoa</taxon>
        <taxon>Evosea</taxon>
        <taxon>Eumycetozoa</taxon>
        <taxon>Dictyostelia</taxon>
        <taxon>Dictyosteliales</taxon>
        <taxon>Dictyosteliaceae</taxon>
        <taxon>Dictyostelium</taxon>
    </lineage>
</organism>
<sequence length="172" mass="19899">MAKVSNYNNNNNNNNNNNNNNNNNNNYNQNSNNNINSNNNDKFNNRLKCLNCCRLGHTKANWWINNNNNNKDNSYNNNKINNIRDEEDVDLNGDDTFNDSNNDNSPSRGSINAIGENQEKLEKQNQMVISEKDCQENTSSKSIFSSNISIYRKGVKFIWNDKLCEYEINDKT</sequence>
<accession>Q86AE7</accession>
<accession>Q55AY6</accession>
<feature type="chain" id="PRO_0000348156" description="Putative uncharacterized protein DDB_G0271526">
    <location>
        <begin position="1"/>
        <end position="172"/>
    </location>
</feature>
<feature type="region of interest" description="Disordered" evidence="1">
    <location>
        <begin position="1"/>
        <end position="39"/>
    </location>
</feature>
<feature type="region of interest" description="Disordered" evidence="1">
    <location>
        <begin position="90"/>
        <end position="112"/>
    </location>
</feature>
<feature type="compositionally biased region" description="Low complexity" evidence="1">
    <location>
        <begin position="98"/>
        <end position="110"/>
    </location>
</feature>
<gene>
    <name type="ORF">DDB_G0271526</name>
</gene>
<evidence type="ECO:0000256" key="1">
    <source>
        <dbReference type="SAM" id="MobiDB-lite"/>
    </source>
</evidence>
<protein>
    <recommendedName>
        <fullName>Putative uncharacterized protein DDB_G0271526</fullName>
    </recommendedName>
</protein>
<name>Y8383_DICDI</name>